<name>CLC1_SCHPO</name>
<accession>Q9USP6</accession>
<accession>O42710</accession>
<comment type="function">
    <text>Clathrin is the major protein of the polyhedral coat of coated pits and vesicles.</text>
</comment>
<comment type="subunit">
    <text>Clathrin coats are formed from molecules containing 3 heavy chains and 3 light chains.</text>
</comment>
<comment type="subcellular location">
    <subcellularLocation>
        <location evidence="1">Cytoplasmic vesicle membrane</location>
        <topology evidence="1">Peripheral membrane protein</topology>
        <orientation evidence="1">Cytoplasmic side</orientation>
    </subcellularLocation>
    <subcellularLocation>
        <location evidence="1">Membrane</location>
        <location evidence="1">Coated pit</location>
        <topology evidence="1">Peripheral membrane protein</topology>
        <orientation evidence="1">Cytoplasmic side</orientation>
    </subcellularLocation>
    <text evidence="1">Cytoplasmic face of coated pits and vesicles.</text>
</comment>
<comment type="similarity">
    <text evidence="4">Belongs to the clathrin light chain family.</text>
</comment>
<reference key="1">
    <citation type="journal article" date="2002" name="Nature">
        <title>The genome sequence of Schizosaccharomyces pombe.</title>
        <authorList>
            <person name="Wood V."/>
            <person name="Gwilliam R."/>
            <person name="Rajandream M.A."/>
            <person name="Lyne M.H."/>
            <person name="Lyne R."/>
            <person name="Stewart A."/>
            <person name="Sgouros J.G."/>
            <person name="Peat N."/>
            <person name="Hayles J."/>
            <person name="Baker S.G."/>
            <person name="Basham D."/>
            <person name="Bowman S."/>
            <person name="Brooks K."/>
            <person name="Brown D."/>
            <person name="Brown S."/>
            <person name="Chillingworth T."/>
            <person name="Churcher C.M."/>
            <person name="Collins M."/>
            <person name="Connor R."/>
            <person name="Cronin A."/>
            <person name="Davis P."/>
            <person name="Feltwell T."/>
            <person name="Fraser A."/>
            <person name="Gentles S."/>
            <person name="Goble A."/>
            <person name="Hamlin N."/>
            <person name="Harris D.E."/>
            <person name="Hidalgo J."/>
            <person name="Hodgson G."/>
            <person name="Holroyd S."/>
            <person name="Hornsby T."/>
            <person name="Howarth S."/>
            <person name="Huckle E.J."/>
            <person name="Hunt S."/>
            <person name="Jagels K."/>
            <person name="James K.D."/>
            <person name="Jones L."/>
            <person name="Jones M."/>
            <person name="Leather S."/>
            <person name="McDonald S."/>
            <person name="McLean J."/>
            <person name="Mooney P."/>
            <person name="Moule S."/>
            <person name="Mungall K.L."/>
            <person name="Murphy L.D."/>
            <person name="Niblett D."/>
            <person name="Odell C."/>
            <person name="Oliver K."/>
            <person name="O'Neil S."/>
            <person name="Pearson D."/>
            <person name="Quail M.A."/>
            <person name="Rabbinowitsch E."/>
            <person name="Rutherford K.M."/>
            <person name="Rutter S."/>
            <person name="Saunders D."/>
            <person name="Seeger K."/>
            <person name="Sharp S."/>
            <person name="Skelton J."/>
            <person name="Simmonds M.N."/>
            <person name="Squares R."/>
            <person name="Squares S."/>
            <person name="Stevens K."/>
            <person name="Taylor K."/>
            <person name="Taylor R.G."/>
            <person name="Tivey A."/>
            <person name="Walsh S.V."/>
            <person name="Warren T."/>
            <person name="Whitehead S."/>
            <person name="Woodward J.R."/>
            <person name="Volckaert G."/>
            <person name="Aert R."/>
            <person name="Robben J."/>
            <person name="Grymonprez B."/>
            <person name="Weltjens I."/>
            <person name="Vanstreels E."/>
            <person name="Rieger M."/>
            <person name="Schaefer M."/>
            <person name="Mueller-Auer S."/>
            <person name="Gabel C."/>
            <person name="Fuchs M."/>
            <person name="Duesterhoeft A."/>
            <person name="Fritzc C."/>
            <person name="Holzer E."/>
            <person name="Moestl D."/>
            <person name="Hilbert H."/>
            <person name="Borzym K."/>
            <person name="Langer I."/>
            <person name="Beck A."/>
            <person name="Lehrach H."/>
            <person name="Reinhardt R."/>
            <person name="Pohl T.M."/>
            <person name="Eger P."/>
            <person name="Zimmermann W."/>
            <person name="Wedler H."/>
            <person name="Wambutt R."/>
            <person name="Purnelle B."/>
            <person name="Goffeau A."/>
            <person name="Cadieu E."/>
            <person name="Dreano S."/>
            <person name="Gloux S."/>
            <person name="Lelaure V."/>
            <person name="Mottier S."/>
            <person name="Galibert F."/>
            <person name="Aves S.J."/>
            <person name="Xiang Z."/>
            <person name="Hunt C."/>
            <person name="Moore K."/>
            <person name="Hurst S.M."/>
            <person name="Lucas M."/>
            <person name="Rochet M."/>
            <person name="Gaillardin C."/>
            <person name="Tallada V.A."/>
            <person name="Garzon A."/>
            <person name="Thode G."/>
            <person name="Daga R.R."/>
            <person name="Cruzado L."/>
            <person name="Jimenez J."/>
            <person name="Sanchez M."/>
            <person name="del Rey F."/>
            <person name="Benito J."/>
            <person name="Dominguez A."/>
            <person name="Revuelta J.L."/>
            <person name="Moreno S."/>
            <person name="Armstrong J."/>
            <person name="Forsburg S.L."/>
            <person name="Cerutti L."/>
            <person name="Lowe T."/>
            <person name="McCombie W.R."/>
            <person name="Paulsen I."/>
            <person name="Potashkin J."/>
            <person name="Shpakovski G.V."/>
            <person name="Ussery D."/>
            <person name="Barrell B.G."/>
            <person name="Nurse P."/>
        </authorList>
    </citation>
    <scope>NUCLEOTIDE SEQUENCE [LARGE SCALE GENOMIC DNA]</scope>
    <source>
        <strain>972 / ATCC 24843</strain>
    </source>
</reference>
<reference key="2">
    <citation type="submission" date="1998-03" db="EMBL/GenBank/DDBJ databases">
        <title>S.pombe clathrin light chain.</title>
        <authorList>
            <person name="Kawamukai M."/>
        </authorList>
    </citation>
    <scope>NUCLEOTIDE SEQUENCE [MRNA] OF 6-229</scope>
</reference>
<reference key="3">
    <citation type="journal article" date="2008" name="J. Proteome Res.">
        <title>Phosphoproteome analysis of fission yeast.</title>
        <authorList>
            <person name="Wilson-Grady J.T."/>
            <person name="Villen J."/>
            <person name="Gygi S.P."/>
        </authorList>
    </citation>
    <scope>PHOSPHORYLATION [LARGE SCALE ANALYSIS] AT SER-229</scope>
    <scope>IDENTIFICATION BY MASS SPECTROMETRY</scope>
</reference>
<gene>
    <name type="primary">clc1</name>
    <name type="ORF">SPBC9B6.08</name>
</gene>
<organism>
    <name type="scientific">Schizosaccharomyces pombe (strain 972 / ATCC 24843)</name>
    <name type="common">Fission yeast</name>
    <dbReference type="NCBI Taxonomy" id="284812"/>
    <lineage>
        <taxon>Eukaryota</taxon>
        <taxon>Fungi</taxon>
        <taxon>Dikarya</taxon>
        <taxon>Ascomycota</taxon>
        <taxon>Taphrinomycotina</taxon>
        <taxon>Schizosaccharomycetes</taxon>
        <taxon>Schizosaccharomycetales</taxon>
        <taxon>Schizosaccharomycetaceae</taxon>
        <taxon>Schizosaccharomyces</taxon>
    </lineage>
</organism>
<protein>
    <recommendedName>
        <fullName>Clathrin light chain</fullName>
        <shortName>CLC</shortName>
    </recommendedName>
</protein>
<sequence length="229" mass="25863">MSQFPALEDFDDGLVTAPVDDSKNNTDFLEREKLALGEDAGQFETPEDKDALLNFENDSEAEQTRFEQNFPPIDAEMQASGTFSAPKAPYMGQAEVHPPEDESGDPEPVRKWKEDQMKRIQERDESSKKLRESNIEKARKAIDDFYENFNDKRDKVIAKSRKEQEKLLEENESKSTGTTSWERILKLIDLSDKPEAHGRSTERFRELLISLAKDSNAPGAAGTTVSSSS</sequence>
<feature type="chain" id="PRO_0000205775" description="Clathrin light chain">
    <location>
        <begin position="1"/>
        <end position="229"/>
    </location>
</feature>
<feature type="region of interest" description="Disordered" evidence="2">
    <location>
        <begin position="1"/>
        <end position="24"/>
    </location>
</feature>
<feature type="region of interest" description="Disordered" evidence="2">
    <location>
        <begin position="76"/>
        <end position="132"/>
    </location>
</feature>
<feature type="compositionally biased region" description="Basic and acidic residues" evidence="2">
    <location>
        <begin position="107"/>
        <end position="132"/>
    </location>
</feature>
<feature type="modified residue" description="Phosphoserine" evidence="3">
    <location>
        <position position="229"/>
    </location>
</feature>
<evidence type="ECO:0000250" key="1"/>
<evidence type="ECO:0000256" key="2">
    <source>
        <dbReference type="SAM" id="MobiDB-lite"/>
    </source>
</evidence>
<evidence type="ECO:0000269" key="3">
    <source>
    </source>
</evidence>
<evidence type="ECO:0000305" key="4"/>
<proteinExistence type="evidence at protein level"/>
<keyword id="KW-0168">Coated pit</keyword>
<keyword id="KW-0968">Cytoplasmic vesicle</keyword>
<keyword id="KW-0472">Membrane</keyword>
<keyword id="KW-0597">Phosphoprotein</keyword>
<keyword id="KW-1185">Reference proteome</keyword>
<dbReference type="EMBL" id="CU329671">
    <property type="protein sequence ID" value="CAB42369.1"/>
    <property type="molecule type" value="Genomic_DNA"/>
</dbReference>
<dbReference type="EMBL" id="AB011822">
    <property type="protein sequence ID" value="BAA25104.1"/>
    <property type="molecule type" value="mRNA"/>
</dbReference>
<dbReference type="PIR" id="T40789">
    <property type="entry name" value="T40789"/>
</dbReference>
<dbReference type="PIR" id="T43331">
    <property type="entry name" value="T43331"/>
</dbReference>
<dbReference type="RefSeq" id="NP_595750.1">
    <property type="nucleotide sequence ID" value="NM_001021650.2"/>
</dbReference>
<dbReference type="SMR" id="Q9USP6"/>
<dbReference type="BioGRID" id="277817">
    <property type="interactions" value="9"/>
</dbReference>
<dbReference type="FunCoup" id="Q9USP6">
    <property type="interactions" value="247"/>
</dbReference>
<dbReference type="IntAct" id="Q9USP6">
    <property type="interactions" value="2"/>
</dbReference>
<dbReference type="STRING" id="284812.Q9USP6"/>
<dbReference type="iPTMnet" id="Q9USP6"/>
<dbReference type="PaxDb" id="4896-SPBC9B6.08.1"/>
<dbReference type="EnsemblFungi" id="SPBC9B6.08.1">
    <property type="protein sequence ID" value="SPBC9B6.08.1:pep"/>
    <property type="gene ID" value="SPBC9B6.08"/>
</dbReference>
<dbReference type="GeneID" id="2541305"/>
<dbReference type="KEGG" id="spo:2541305"/>
<dbReference type="PomBase" id="SPBC9B6.08">
    <property type="gene designation" value="clc1"/>
</dbReference>
<dbReference type="VEuPathDB" id="FungiDB:SPBC9B6.08"/>
<dbReference type="eggNOG" id="KOG4031">
    <property type="taxonomic scope" value="Eukaryota"/>
</dbReference>
<dbReference type="HOGENOM" id="CLU_069856_0_0_1"/>
<dbReference type="InParanoid" id="Q9USP6"/>
<dbReference type="OMA" id="FYENYNT"/>
<dbReference type="PhylomeDB" id="Q9USP6"/>
<dbReference type="Reactome" id="R-SPO-432720">
    <property type="pathway name" value="Lysosome Vesicle Biogenesis"/>
</dbReference>
<dbReference type="Reactome" id="R-SPO-437239">
    <property type="pathway name" value="Recycling pathway of L1"/>
</dbReference>
<dbReference type="Reactome" id="R-SPO-8856828">
    <property type="pathway name" value="Clathrin-mediated endocytosis"/>
</dbReference>
<dbReference type="Reactome" id="R-SPO-8866427">
    <property type="pathway name" value="VLDLR internalisation and degradation"/>
</dbReference>
<dbReference type="Reactome" id="R-SPO-8964038">
    <property type="pathway name" value="LDL clearance"/>
</dbReference>
<dbReference type="PRO" id="PR:Q9USP6"/>
<dbReference type="Proteomes" id="UP000002485">
    <property type="component" value="Chromosome II"/>
</dbReference>
<dbReference type="GO" id="GO:0030479">
    <property type="term" value="C:actin cortical patch"/>
    <property type="evidence" value="ECO:0000314"/>
    <property type="project" value="PomBase"/>
</dbReference>
<dbReference type="GO" id="GO:0030132">
    <property type="term" value="C:clathrin coat of coated pit"/>
    <property type="evidence" value="ECO:0007669"/>
    <property type="project" value="InterPro"/>
</dbReference>
<dbReference type="GO" id="GO:0030130">
    <property type="term" value="C:clathrin coat of trans-Golgi network vesicle"/>
    <property type="evidence" value="ECO:0007669"/>
    <property type="project" value="InterPro"/>
</dbReference>
<dbReference type="GO" id="GO:0030125">
    <property type="term" value="C:clathrin vesicle coat"/>
    <property type="evidence" value="ECO:0000318"/>
    <property type="project" value="GO_Central"/>
</dbReference>
<dbReference type="GO" id="GO:0005737">
    <property type="term" value="C:cytoplasm"/>
    <property type="evidence" value="ECO:0007005"/>
    <property type="project" value="PomBase"/>
</dbReference>
<dbReference type="GO" id="GO:0031410">
    <property type="term" value="C:cytoplasmic vesicle"/>
    <property type="evidence" value="ECO:0000314"/>
    <property type="project" value="PomBase"/>
</dbReference>
<dbReference type="GO" id="GO:0005768">
    <property type="term" value="C:endosome"/>
    <property type="evidence" value="ECO:0000314"/>
    <property type="project" value="PomBase"/>
</dbReference>
<dbReference type="GO" id="GO:0005794">
    <property type="term" value="C:Golgi apparatus"/>
    <property type="evidence" value="ECO:0000314"/>
    <property type="project" value="PomBase"/>
</dbReference>
<dbReference type="GO" id="GO:0005886">
    <property type="term" value="C:plasma membrane"/>
    <property type="evidence" value="ECO:0000318"/>
    <property type="project" value="GO_Central"/>
</dbReference>
<dbReference type="GO" id="GO:0032050">
    <property type="term" value="F:clathrin heavy chain binding"/>
    <property type="evidence" value="ECO:0000318"/>
    <property type="project" value="GO_Central"/>
</dbReference>
<dbReference type="GO" id="GO:0005198">
    <property type="term" value="F:structural molecule activity"/>
    <property type="evidence" value="ECO:0007669"/>
    <property type="project" value="InterPro"/>
</dbReference>
<dbReference type="GO" id="GO:0072583">
    <property type="term" value="P:clathrin-dependent endocytosis"/>
    <property type="evidence" value="ECO:0000316"/>
    <property type="project" value="PomBase"/>
</dbReference>
<dbReference type="GO" id="GO:0006887">
    <property type="term" value="P:exocytosis"/>
    <property type="evidence" value="ECO:0000315"/>
    <property type="project" value="PomBase"/>
</dbReference>
<dbReference type="GO" id="GO:0006886">
    <property type="term" value="P:intracellular protein transport"/>
    <property type="evidence" value="ECO:0000303"/>
    <property type="project" value="PomBase"/>
</dbReference>
<dbReference type="InterPro" id="IPR000996">
    <property type="entry name" value="Clathrin_L-chain"/>
</dbReference>
<dbReference type="PANTHER" id="PTHR10639">
    <property type="entry name" value="CLATHRIN LIGHT CHAIN"/>
    <property type="match status" value="1"/>
</dbReference>
<dbReference type="PANTHER" id="PTHR10639:SF7">
    <property type="entry name" value="CLATHRIN LIGHT CHAIN"/>
    <property type="match status" value="1"/>
</dbReference>
<dbReference type="Pfam" id="PF01086">
    <property type="entry name" value="Clathrin_lg_ch"/>
    <property type="match status" value="1"/>
</dbReference>
<dbReference type="PROSITE" id="PS00581">
    <property type="entry name" value="CLATHRIN_LIGHT_CHN_2"/>
    <property type="match status" value="1"/>
</dbReference>